<sequence length="179" mass="20756">MAKTAMAYKEKMKELSMLSLICSCFYPEPRNINIYTYDDMEVKQINKRASGQAFELILKPPSPISEAPRTLASPKKKDLSLEEIQKKLEAAEGRRKSQEAQVLKQLAEKREHEREVLQKALEENNNFSKMAEEKLILKMEQIKENREANLAAIIERLQEKERHAAEVRRNKELQVELSG</sequence>
<name>STMN2_RAT</name>
<gene>
    <name type="primary">Stmn2</name>
    <name type="synonym">Scg10</name>
    <name type="synonym">Scgn10</name>
</gene>
<protein>
    <recommendedName>
        <fullName>Stathmin-2</fullName>
    </recommendedName>
    <alternativeName>
        <fullName>Superior cervical ganglion-10 protein</fullName>
        <shortName>Protein SCG10</shortName>
    </alternativeName>
</protein>
<reference key="1">
    <citation type="journal article" date="1988" name="Neuron">
        <title>The NGF-inducible SCG10 mRNA encodes a novel membrane-bound protein present in growth cones and abundant in developing neurons.</title>
        <authorList>
            <person name="Stein R."/>
            <person name="Mori N."/>
            <person name="Matthews K."/>
            <person name="Lo L.-C."/>
            <person name="Anderson D.J."/>
        </authorList>
    </citation>
    <scope>NUCLEOTIDE SEQUENCE [MRNA]</scope>
</reference>
<reference key="2">
    <citation type="submission" date="2000-09" db="EMBL/GenBank/DDBJ databases">
        <title>Novel genes expressed in rat dorsal root ganglion.</title>
        <authorList>
            <person name="Xiao H."/>
            <person name="Huang Q."/>
            <person name="Zhang F."/>
            <person name="Yang Z."/>
            <person name="Chen Z."/>
            <person name="Han Z."/>
            <person name="Zhang X."/>
        </authorList>
    </citation>
    <scope>NUCLEOTIDE SEQUENCE [MRNA]</scope>
    <source>
        <strain>Sprague-Dawley</strain>
        <tissue>Spinal ganglion</tissue>
    </source>
</reference>
<reference key="3">
    <citation type="journal article" date="2004" name="Genome Res.">
        <title>The status, quality, and expansion of the NIH full-length cDNA project: the Mammalian Gene Collection (MGC).</title>
        <authorList>
            <consortium name="The MGC Project Team"/>
        </authorList>
    </citation>
    <scope>NUCLEOTIDE SEQUENCE [LARGE SCALE MRNA]</scope>
    <source>
        <tissue>Brain</tissue>
    </source>
</reference>
<reference key="4">
    <citation type="journal article" date="1997" name="Proc. Natl. Acad. Sci. U.S.A.">
        <title>Regulation of microtubule dynamics by the neuronal growth-associated protein SCG10.</title>
        <authorList>
            <person name="Riederer B.M."/>
            <person name="Pellier V."/>
            <person name="Antonsson B."/>
            <person name="Di Paolo G."/>
            <person name="Stimpson S.A."/>
            <person name="Luetjens R."/>
            <person name="Catsicas S."/>
            <person name="Grenningloh G."/>
        </authorList>
    </citation>
    <scope>FUNCTION</scope>
</reference>
<reference key="5">
    <citation type="journal article" date="2006" name="J. Cell Biol.">
        <title>JNK1 phosphorylation of SCG10 determines microtubule dynamics and axodendritic length.</title>
        <authorList>
            <person name="Tararuk T."/>
            <person name="Ostman N."/>
            <person name="Li W."/>
            <person name="Bjorkblom B."/>
            <person name="Padzik A."/>
            <person name="Zdrojewska J."/>
            <person name="Hongisto V."/>
            <person name="Herdegen T."/>
            <person name="Konopka W."/>
            <person name="Courtney M.J."/>
            <person name="Coffey E.T."/>
        </authorList>
    </citation>
    <scope>FUNCTION</scope>
    <scope>SUBCELLULAR LOCATION</scope>
    <scope>PHOSPHORYLATION AT SER-62 AND SER-73</scope>
    <scope>INTERACTION WITH MAPK8</scope>
    <scope>MUTAGENESIS OF SER-62 AND SER-73</scope>
</reference>
<reference key="6">
    <citation type="journal article" date="2011" name="Biochim. Biophys. Acta">
        <title>Calmyrin1 binds to SCG10 protein (stathmin2) to modulate neurite outgrowth.</title>
        <authorList>
            <person name="Sobczak A."/>
            <person name="Debowska K."/>
            <person name="Blazejczyk M."/>
            <person name="Kreutz M.R."/>
            <person name="Kuznicki J."/>
            <person name="Wojda U."/>
        </authorList>
    </citation>
    <scope>SUBCELLULAR LOCATION</scope>
    <scope>TISSUE SPECIFICITY</scope>
</reference>
<reference key="7">
    <citation type="journal article" date="2011" name="Nat. Neurosci.">
        <title>Phosphorylation of SCG10/stathmin-2 determines multipolar stage exit and neuronal migration rate.</title>
        <authorList>
            <person name="Westerlund N."/>
            <person name="Zdrojewska J."/>
            <person name="Padzik A."/>
            <person name="Komulainen E."/>
            <person name="Bjorkblom B."/>
            <person name="Rannikko E."/>
            <person name="Tararuk T."/>
            <person name="Garcia-Frigola C."/>
            <person name="Sandholm J."/>
            <person name="Nguyen L."/>
            <person name="Kallunki T."/>
            <person name="Courtney M.J."/>
            <person name="Coffey E.T."/>
        </authorList>
    </citation>
    <scope>FUNCTION</scope>
</reference>
<reference key="8">
    <citation type="journal article" date="2012" name="Nat. Commun.">
        <title>Quantitative maps of protein phosphorylation sites across 14 different rat organs and tissues.</title>
        <authorList>
            <person name="Lundby A."/>
            <person name="Secher A."/>
            <person name="Lage K."/>
            <person name="Nordsborg N.B."/>
            <person name="Dmytriyev A."/>
            <person name="Lundby C."/>
            <person name="Olsen J.V."/>
        </authorList>
    </citation>
    <scope>PHOSPHORYLATION [LARGE SCALE ANALYSIS] AT SER-50 AND SER-62</scope>
    <scope>IDENTIFICATION BY MASS SPECTROMETRY [LARGE SCALE ANALYSIS]</scope>
</reference>
<comment type="function">
    <text evidence="6 8 9">Regulator of microtubule stability. When phosphorylated by MAPK8, stabilizes microtubules and consequently controls neurite length in cortical neurons. In the developing brain, negatively regulates the rate of exit from multipolar stage and retards radial migration from the ventricular zone.</text>
</comment>
<comment type="subunit">
    <text evidence="1">Interacts with ITM2C (By similarity). Interacts with MAPK8. Interacts with KIFBP (By similarity). Interacts (via the N-terminal region) with CIB1 (via C-terminal region); the interaction is direct, occurs in a calcium-dependent manner and attenuates the neurite outgrowth inhibition of STMN2 (By similarity).</text>
</comment>
<comment type="subcellular location">
    <subcellularLocation>
        <location>Cytoplasm</location>
    </subcellularLocation>
    <subcellularLocation>
        <location>Cytoplasm</location>
        <location>Perinuclear region</location>
    </subcellularLocation>
    <subcellularLocation>
        <location>Cell projection</location>
        <location>Growth cone</location>
    </subcellularLocation>
    <subcellularLocation>
        <location>Cell projection</location>
        <location>Axon</location>
    </subcellularLocation>
    <subcellularLocation>
        <location evidence="10">Membrane</location>
        <topology evidence="10">Peripheral membrane protein</topology>
        <orientation evidence="10">Cytoplasmic side</orientation>
    </subcellularLocation>
    <subcellularLocation>
        <location>Golgi apparatus</location>
    </subcellularLocation>
    <subcellularLocation>
        <location>Endosome</location>
    </subcellularLocation>
    <subcellularLocation>
        <location evidence="1">Cell projection</location>
        <location evidence="1">Lamellipodium</location>
    </subcellularLocation>
    <text evidence="1">Colocalized with CIB1 in the cell body, neuritis and growth cones of neurons. Colocalized with CIB1 to the leading edge of lamellipodia (By similarity). Associated with punctate structures in the perinuclear cytoplasm, axons, and growth cones of developing neurons. Exists in both soluble and membrane-bound forms. Colocalized with CIB1 in neurites of developing hippocampal primary neurons.</text>
</comment>
<comment type="tissue specificity">
    <text evidence="7">Expressed in neurons (at protein level). Present in growth cones and abundant in developing neurons.</text>
</comment>
<comment type="developmental stage">
    <text>In the developing cerebellum, maximal levels occur at postnatal day 7 and correlate with the onset of neuronal differentiation.</text>
</comment>
<comment type="induction">
    <text>By nerve growth factor.</text>
</comment>
<comment type="PTM">
    <text evidence="1">Sumoylated.</text>
</comment>
<comment type="PTM">
    <text evidence="1 6">Phosphorylated by MAPK9 and MAPK10 in the developing brain cortex (By similarity). Phosphorylated mostly by MAPK8.</text>
</comment>
<comment type="PTM">
    <text evidence="1">N-terminal palmitoylation promotes specific anchoring to the cytosolic leaflet of Golgi membranes and subsequent vesicular trafficking along dendrites and axons. Neuronal Stathmins are substrates for palmitoyltransferases ZDHHC3, ZDHHC7 and ZDHHC15 (By similarity).</text>
</comment>
<comment type="similarity">
    <text evidence="10">Belongs to the stathmin family.</text>
</comment>
<organism>
    <name type="scientific">Rattus norvegicus</name>
    <name type="common">Rat</name>
    <dbReference type="NCBI Taxonomy" id="10116"/>
    <lineage>
        <taxon>Eukaryota</taxon>
        <taxon>Metazoa</taxon>
        <taxon>Chordata</taxon>
        <taxon>Craniata</taxon>
        <taxon>Vertebrata</taxon>
        <taxon>Euteleostomi</taxon>
        <taxon>Mammalia</taxon>
        <taxon>Eutheria</taxon>
        <taxon>Euarchontoglires</taxon>
        <taxon>Glires</taxon>
        <taxon>Rodentia</taxon>
        <taxon>Myomorpha</taxon>
        <taxon>Muroidea</taxon>
        <taxon>Muridae</taxon>
        <taxon>Murinae</taxon>
        <taxon>Rattus</taxon>
    </lineage>
</organism>
<feature type="chain" id="PRO_0000182398" description="Stathmin-2">
    <location>
        <begin position="1"/>
        <end position="179"/>
    </location>
</feature>
<feature type="domain" description="SLD" evidence="5">
    <location>
        <begin position="38"/>
        <end position="179"/>
    </location>
</feature>
<feature type="region of interest" description="Membrane attachment" evidence="4">
    <location>
        <begin position="1"/>
        <end position="26"/>
    </location>
</feature>
<feature type="region of interest" description="Regulatory/phosphorylation domain" evidence="4">
    <location>
        <begin position="39"/>
        <end position="96"/>
    </location>
</feature>
<feature type="coiled-coil region" evidence="4">
    <location>
        <begin position="75"/>
        <end position="179"/>
    </location>
</feature>
<feature type="modified residue" description="Phosphoserine" evidence="4">
    <location>
        <position position="16"/>
    </location>
</feature>
<feature type="modified residue" description="Phosphoserine" evidence="11">
    <location>
        <position position="50"/>
    </location>
</feature>
<feature type="modified residue" description="Phosphoserine; by MAPK8" evidence="6 11">
    <location>
        <position position="62"/>
    </location>
</feature>
<feature type="modified residue" description="Phosphoserine; by MAPK8" evidence="6">
    <location>
        <position position="73"/>
    </location>
</feature>
<feature type="modified residue" description="Phosphoserine" evidence="3 4">
    <location>
        <position position="80"/>
    </location>
</feature>
<feature type="modified residue" description="Phosphoserine" evidence="2 4">
    <location>
        <position position="97"/>
    </location>
</feature>
<feature type="lipid moiety-binding region" description="S-palmitoyl cysteine" evidence="1">
    <location>
        <position position="22"/>
    </location>
</feature>
<feature type="lipid moiety-binding region" description="S-palmitoyl cysteine" evidence="1">
    <location>
        <position position="24"/>
    </location>
</feature>
<feature type="mutagenesis site" description="Partial loss of phosphorylation. Complete loss of phosphorylation by MAPK8, increased microtubule solubility, and reduced neurite length; when associated with A-73." evidence="6">
    <original>S</original>
    <variation>A</variation>
    <location>
        <position position="62"/>
    </location>
</feature>
<feature type="mutagenesis site" description="Increased microtubule stability but no effect on neurite length; when associated with A-73." evidence="6">
    <original>S</original>
    <variation>D</variation>
    <location>
        <position position="62"/>
    </location>
</feature>
<feature type="mutagenesis site" description="Partial loss of phosphorylation. Complete loss of phosphorylation by MAPK8, increased microtubule solubility, and reduced neurite length; when associated with A-62." evidence="6">
    <original>S</original>
    <variation>A</variation>
    <location>
        <position position="73"/>
    </location>
</feature>
<feature type="mutagenesis site" description="Increased microtubule stability but no effect on neurite length; when associated with A-62." evidence="6">
    <original>S</original>
    <variation>D</variation>
    <location>
        <position position="73"/>
    </location>
</feature>
<feature type="sequence conflict" description="In Ref. 1; no nucleotide entry." evidence="10" ref="1">
    <original>K</original>
    <variation>L</variation>
    <location>
        <position position="59"/>
    </location>
</feature>
<evidence type="ECO:0000250" key="1"/>
<evidence type="ECO:0000250" key="2">
    <source>
        <dbReference type="UniProtKB" id="P16949"/>
    </source>
</evidence>
<evidence type="ECO:0000250" key="3">
    <source>
        <dbReference type="UniProtKB" id="Q9JHU6"/>
    </source>
</evidence>
<evidence type="ECO:0000255" key="4"/>
<evidence type="ECO:0000255" key="5">
    <source>
        <dbReference type="PROSITE-ProRule" id="PRU00998"/>
    </source>
</evidence>
<evidence type="ECO:0000269" key="6">
    <source>
    </source>
</evidence>
<evidence type="ECO:0000269" key="7">
    <source>
    </source>
</evidence>
<evidence type="ECO:0000269" key="8">
    <source>
    </source>
</evidence>
<evidence type="ECO:0000269" key="9">
    <source>
    </source>
</evidence>
<evidence type="ECO:0000305" key="10"/>
<evidence type="ECO:0007744" key="11">
    <source>
    </source>
</evidence>
<accession>P21818</accession>
<accession>Q9ERH2</accession>
<proteinExistence type="evidence at protein level"/>
<keyword id="KW-0966">Cell projection</keyword>
<keyword id="KW-0175">Coiled coil</keyword>
<keyword id="KW-0963">Cytoplasm</keyword>
<keyword id="KW-0967">Endosome</keyword>
<keyword id="KW-0333">Golgi apparatus</keyword>
<keyword id="KW-0449">Lipoprotein</keyword>
<keyword id="KW-0472">Membrane</keyword>
<keyword id="KW-0564">Palmitate</keyword>
<keyword id="KW-0597">Phosphoprotein</keyword>
<keyword id="KW-1185">Reference proteome</keyword>
<keyword id="KW-0832">Ubl conjugation</keyword>
<dbReference type="EMBL" id="AF306458">
    <property type="protein sequence ID" value="AAG33230.1"/>
    <property type="molecule type" value="mRNA"/>
</dbReference>
<dbReference type="EMBL" id="BC087660">
    <property type="protein sequence ID" value="AAH87660.1"/>
    <property type="molecule type" value="mRNA"/>
</dbReference>
<dbReference type="PIR" id="A36110">
    <property type="entry name" value="A36110"/>
</dbReference>
<dbReference type="RefSeq" id="NP_445892.1">
    <property type="nucleotide sequence ID" value="NM_053440.2"/>
</dbReference>
<dbReference type="SMR" id="P21818"/>
<dbReference type="FunCoup" id="P21818">
    <property type="interactions" value="388"/>
</dbReference>
<dbReference type="IntAct" id="P21818">
    <property type="interactions" value="2"/>
</dbReference>
<dbReference type="MINT" id="P21818"/>
<dbReference type="STRING" id="10116.ENSRNOP00000015720"/>
<dbReference type="iPTMnet" id="P21818"/>
<dbReference type="PhosphoSitePlus" id="P21818"/>
<dbReference type="SwissPalm" id="P21818"/>
<dbReference type="jPOST" id="P21818"/>
<dbReference type="PaxDb" id="10116-ENSRNOP00000015720"/>
<dbReference type="ABCD" id="P21818">
    <property type="antibodies" value="1 sequenced antibody"/>
</dbReference>
<dbReference type="Ensembl" id="ENSRNOT00000015720.7">
    <property type="protein sequence ID" value="ENSRNOP00000015720.5"/>
    <property type="gene ID" value="ENSRNOG00000011705.8"/>
</dbReference>
<dbReference type="GeneID" id="84510"/>
<dbReference type="KEGG" id="rno:84510"/>
<dbReference type="UCSC" id="RGD:68947">
    <property type="organism name" value="rat"/>
</dbReference>
<dbReference type="AGR" id="RGD:68947"/>
<dbReference type="CTD" id="11075"/>
<dbReference type="RGD" id="68947">
    <property type="gene designation" value="Stmn2"/>
</dbReference>
<dbReference type="eggNOG" id="ENOG502RENQ">
    <property type="taxonomic scope" value="Eukaryota"/>
</dbReference>
<dbReference type="GeneTree" id="ENSGT01030000234597"/>
<dbReference type="HOGENOM" id="CLU_102026_0_0_1"/>
<dbReference type="InParanoid" id="P21818"/>
<dbReference type="OrthoDB" id="41296at9989"/>
<dbReference type="Reactome" id="R-RNO-9696273">
    <property type="pathway name" value="RND1 GTPase cycle"/>
</dbReference>
<dbReference type="PRO" id="PR:P21818"/>
<dbReference type="Proteomes" id="UP000002494">
    <property type="component" value="Chromosome 2"/>
</dbReference>
<dbReference type="Bgee" id="ENSRNOG00000011705">
    <property type="expression patterns" value="Expressed in cerebellum and 18 other cell types or tissues"/>
</dbReference>
<dbReference type="GO" id="GO:0005737">
    <property type="term" value="C:cytoplasm"/>
    <property type="evidence" value="ECO:0000250"/>
    <property type="project" value="UniProtKB"/>
</dbReference>
<dbReference type="GO" id="GO:0005768">
    <property type="term" value="C:endosome"/>
    <property type="evidence" value="ECO:0007669"/>
    <property type="project" value="UniProtKB-SubCell"/>
</dbReference>
<dbReference type="GO" id="GO:0005794">
    <property type="term" value="C:Golgi apparatus"/>
    <property type="evidence" value="ECO:0007669"/>
    <property type="project" value="UniProtKB-SubCell"/>
</dbReference>
<dbReference type="GO" id="GO:0030426">
    <property type="term" value="C:growth cone"/>
    <property type="evidence" value="ECO:0000314"/>
    <property type="project" value="RGD"/>
</dbReference>
<dbReference type="GO" id="GO:0030027">
    <property type="term" value="C:lamellipodium"/>
    <property type="evidence" value="ECO:0000250"/>
    <property type="project" value="UniProtKB"/>
</dbReference>
<dbReference type="GO" id="GO:0016020">
    <property type="term" value="C:membrane"/>
    <property type="evidence" value="ECO:0007669"/>
    <property type="project" value="UniProtKB-SubCell"/>
</dbReference>
<dbReference type="GO" id="GO:0043005">
    <property type="term" value="C:neuron projection"/>
    <property type="evidence" value="ECO:0000250"/>
    <property type="project" value="UniProtKB"/>
</dbReference>
<dbReference type="GO" id="GO:0043025">
    <property type="term" value="C:neuronal cell body"/>
    <property type="evidence" value="ECO:0000250"/>
    <property type="project" value="UniProtKB"/>
</dbReference>
<dbReference type="GO" id="GO:0048471">
    <property type="term" value="C:perinuclear region of cytoplasm"/>
    <property type="evidence" value="ECO:0000266"/>
    <property type="project" value="RGD"/>
</dbReference>
<dbReference type="GO" id="GO:0031982">
    <property type="term" value="C:vesicle"/>
    <property type="evidence" value="ECO:0000314"/>
    <property type="project" value="RGD"/>
</dbReference>
<dbReference type="GO" id="GO:0048306">
    <property type="term" value="F:calcium-dependent protein binding"/>
    <property type="evidence" value="ECO:0000266"/>
    <property type="project" value="RGD"/>
</dbReference>
<dbReference type="GO" id="GO:0015631">
    <property type="term" value="F:tubulin binding"/>
    <property type="evidence" value="ECO:0000318"/>
    <property type="project" value="GO_Central"/>
</dbReference>
<dbReference type="GO" id="GO:1990090">
    <property type="term" value="P:cellular response to nerve growth factor stimulus"/>
    <property type="evidence" value="ECO:0000250"/>
    <property type="project" value="UniProtKB"/>
</dbReference>
<dbReference type="GO" id="GO:0007019">
    <property type="term" value="P:microtubule depolymerization"/>
    <property type="evidence" value="ECO:0000318"/>
    <property type="project" value="GO_Central"/>
</dbReference>
<dbReference type="GO" id="GO:0007026">
    <property type="term" value="P:negative regulation of microtubule depolymerization"/>
    <property type="evidence" value="ECO:0000266"/>
    <property type="project" value="RGD"/>
</dbReference>
<dbReference type="GO" id="GO:0031115">
    <property type="term" value="P:negative regulation of microtubule polymerization"/>
    <property type="evidence" value="ECO:0000250"/>
    <property type="project" value="UniProtKB"/>
</dbReference>
<dbReference type="GO" id="GO:0010977">
    <property type="term" value="P:negative regulation of neuron projection development"/>
    <property type="evidence" value="ECO:0000266"/>
    <property type="project" value="RGD"/>
</dbReference>
<dbReference type="GO" id="GO:0031175">
    <property type="term" value="P:neuron projection development"/>
    <property type="evidence" value="ECO:0000318"/>
    <property type="project" value="GO_Central"/>
</dbReference>
<dbReference type="GO" id="GO:0031117">
    <property type="term" value="P:positive regulation of microtubule depolymerization"/>
    <property type="evidence" value="ECO:0000266"/>
    <property type="project" value="RGD"/>
</dbReference>
<dbReference type="GO" id="GO:0010976">
    <property type="term" value="P:positive regulation of neuron projection development"/>
    <property type="evidence" value="ECO:0000250"/>
    <property type="project" value="UniProtKB"/>
</dbReference>
<dbReference type="GO" id="GO:0031110">
    <property type="term" value="P:regulation of microtubule polymerization or depolymerization"/>
    <property type="evidence" value="ECO:0000318"/>
    <property type="project" value="GO_Central"/>
</dbReference>
<dbReference type="Gene3D" id="6.10.280.30">
    <property type="match status" value="1"/>
</dbReference>
<dbReference type="InterPro" id="IPR030514">
    <property type="entry name" value="Stathmin_CS"/>
</dbReference>
<dbReference type="InterPro" id="IPR000956">
    <property type="entry name" value="Stathmin_fam"/>
</dbReference>
<dbReference type="InterPro" id="IPR036002">
    <property type="entry name" value="Stathmin_sf"/>
</dbReference>
<dbReference type="PANTHER" id="PTHR10104">
    <property type="entry name" value="STATHMIN"/>
    <property type="match status" value="1"/>
</dbReference>
<dbReference type="PANTHER" id="PTHR10104:SF18">
    <property type="entry name" value="STATHMIN-2"/>
    <property type="match status" value="1"/>
</dbReference>
<dbReference type="Pfam" id="PF00836">
    <property type="entry name" value="Stathmin"/>
    <property type="match status" value="1"/>
</dbReference>
<dbReference type="PIRSF" id="PIRSF002285">
    <property type="entry name" value="Stathmin"/>
    <property type="match status" value="1"/>
</dbReference>
<dbReference type="PRINTS" id="PR00345">
    <property type="entry name" value="STATHMIN"/>
</dbReference>
<dbReference type="SUPFAM" id="SSF101494">
    <property type="entry name" value="Stathmin"/>
    <property type="match status" value="1"/>
</dbReference>
<dbReference type="PROSITE" id="PS00563">
    <property type="entry name" value="STATHMIN_1"/>
    <property type="match status" value="1"/>
</dbReference>
<dbReference type="PROSITE" id="PS01041">
    <property type="entry name" value="STATHMIN_2"/>
    <property type="match status" value="1"/>
</dbReference>
<dbReference type="PROSITE" id="PS51663">
    <property type="entry name" value="STATHMIN_3"/>
    <property type="match status" value="1"/>
</dbReference>